<gene>
    <name evidence="1" type="primary">pyrB</name>
    <name type="ordered locus">xcc-b100_1415</name>
</gene>
<sequence length="315" mass="33783">MTTMQLDSDGRLRHLLTLEGLPRATLLQLLDRAGQIRDAAVGRVGKRSVLAGTAVCTLFFEPSTRTRSSFHLAAQRLGADVLNFDASTSSTRKGETARDTLKNLEAMGVRGFVVRHPEDGAVERLAEAAGEGTALINAGDGRSAHPTQGLLDMLTLRQAKGTDFSKLKVVIVGDVKHSRVARSDLHALRTLGAGEIRVCGPASLLPDDDMLDGCVVGEDFDAMLEGADALMMLRLQRERMEEGLVPSLEQYHADYGLTRERLARAGRDAAVLHPGPINRGVEITDEVADGAQSCVLRQVANGVAVRMAVLETLLG</sequence>
<dbReference type="EC" id="2.1.3.2" evidence="1"/>
<dbReference type="EMBL" id="AM920689">
    <property type="protein sequence ID" value="CAP50765.1"/>
    <property type="molecule type" value="Genomic_DNA"/>
</dbReference>
<dbReference type="SMR" id="B0RQN0"/>
<dbReference type="KEGG" id="xca:xcc-b100_1415"/>
<dbReference type="HOGENOM" id="CLU_043846_2_0_6"/>
<dbReference type="UniPathway" id="UPA00070">
    <property type="reaction ID" value="UER00116"/>
</dbReference>
<dbReference type="Proteomes" id="UP000001188">
    <property type="component" value="Chromosome"/>
</dbReference>
<dbReference type="GO" id="GO:0005829">
    <property type="term" value="C:cytosol"/>
    <property type="evidence" value="ECO:0007669"/>
    <property type="project" value="TreeGrafter"/>
</dbReference>
<dbReference type="GO" id="GO:0016597">
    <property type="term" value="F:amino acid binding"/>
    <property type="evidence" value="ECO:0007669"/>
    <property type="project" value="InterPro"/>
</dbReference>
<dbReference type="GO" id="GO:0004070">
    <property type="term" value="F:aspartate carbamoyltransferase activity"/>
    <property type="evidence" value="ECO:0007669"/>
    <property type="project" value="UniProtKB-UniRule"/>
</dbReference>
<dbReference type="GO" id="GO:0006207">
    <property type="term" value="P:'de novo' pyrimidine nucleobase biosynthetic process"/>
    <property type="evidence" value="ECO:0007669"/>
    <property type="project" value="InterPro"/>
</dbReference>
<dbReference type="GO" id="GO:0044205">
    <property type="term" value="P:'de novo' UMP biosynthetic process"/>
    <property type="evidence" value="ECO:0007669"/>
    <property type="project" value="UniProtKB-UniRule"/>
</dbReference>
<dbReference type="GO" id="GO:0006520">
    <property type="term" value="P:amino acid metabolic process"/>
    <property type="evidence" value="ECO:0007669"/>
    <property type="project" value="InterPro"/>
</dbReference>
<dbReference type="FunFam" id="3.40.50.1370:FF:000007">
    <property type="entry name" value="Aspartate carbamoyltransferase"/>
    <property type="match status" value="1"/>
</dbReference>
<dbReference type="FunFam" id="3.40.50.1370:FF:000019">
    <property type="entry name" value="Aspartate carbamoyltransferase"/>
    <property type="match status" value="1"/>
</dbReference>
<dbReference type="Gene3D" id="3.40.50.1370">
    <property type="entry name" value="Aspartate/ornithine carbamoyltransferase"/>
    <property type="match status" value="2"/>
</dbReference>
<dbReference type="HAMAP" id="MF_00001">
    <property type="entry name" value="Asp_carb_tr"/>
    <property type="match status" value="1"/>
</dbReference>
<dbReference type="InterPro" id="IPR006132">
    <property type="entry name" value="Asp/Orn_carbamoyltranf_P-bd"/>
</dbReference>
<dbReference type="InterPro" id="IPR006130">
    <property type="entry name" value="Asp/Orn_carbamoylTrfase"/>
</dbReference>
<dbReference type="InterPro" id="IPR036901">
    <property type="entry name" value="Asp/Orn_carbamoylTrfase_sf"/>
</dbReference>
<dbReference type="InterPro" id="IPR002082">
    <property type="entry name" value="Asp_carbamoyltransf"/>
</dbReference>
<dbReference type="InterPro" id="IPR006131">
    <property type="entry name" value="Asp_carbamoyltransf_Asp/Orn-bd"/>
</dbReference>
<dbReference type="NCBIfam" id="TIGR00670">
    <property type="entry name" value="asp_carb_tr"/>
    <property type="match status" value="1"/>
</dbReference>
<dbReference type="NCBIfam" id="NF002032">
    <property type="entry name" value="PRK00856.1"/>
    <property type="match status" value="1"/>
</dbReference>
<dbReference type="PANTHER" id="PTHR45753:SF6">
    <property type="entry name" value="ASPARTATE CARBAMOYLTRANSFERASE"/>
    <property type="match status" value="1"/>
</dbReference>
<dbReference type="PANTHER" id="PTHR45753">
    <property type="entry name" value="ORNITHINE CARBAMOYLTRANSFERASE, MITOCHONDRIAL"/>
    <property type="match status" value="1"/>
</dbReference>
<dbReference type="Pfam" id="PF00185">
    <property type="entry name" value="OTCace"/>
    <property type="match status" value="1"/>
</dbReference>
<dbReference type="Pfam" id="PF02729">
    <property type="entry name" value="OTCace_N"/>
    <property type="match status" value="1"/>
</dbReference>
<dbReference type="PRINTS" id="PR00100">
    <property type="entry name" value="AOTCASE"/>
</dbReference>
<dbReference type="PRINTS" id="PR00101">
    <property type="entry name" value="ATCASE"/>
</dbReference>
<dbReference type="SUPFAM" id="SSF53671">
    <property type="entry name" value="Aspartate/ornithine carbamoyltransferase"/>
    <property type="match status" value="1"/>
</dbReference>
<dbReference type="PROSITE" id="PS00097">
    <property type="entry name" value="CARBAMOYLTRANSFERASE"/>
    <property type="match status" value="1"/>
</dbReference>
<accession>B0RQN0</accession>
<evidence type="ECO:0000255" key="1">
    <source>
        <dbReference type="HAMAP-Rule" id="MF_00001"/>
    </source>
</evidence>
<keyword id="KW-0665">Pyrimidine biosynthesis</keyword>
<keyword id="KW-0808">Transferase</keyword>
<feature type="chain" id="PRO_0000334596" description="Aspartate carbamoyltransferase catalytic subunit">
    <location>
        <begin position="1"/>
        <end position="315"/>
    </location>
</feature>
<feature type="binding site" evidence="1">
    <location>
        <position position="65"/>
    </location>
    <ligand>
        <name>carbamoyl phosphate</name>
        <dbReference type="ChEBI" id="CHEBI:58228"/>
    </ligand>
</feature>
<feature type="binding site" evidence="1">
    <location>
        <position position="66"/>
    </location>
    <ligand>
        <name>carbamoyl phosphate</name>
        <dbReference type="ChEBI" id="CHEBI:58228"/>
    </ligand>
</feature>
<feature type="binding site" evidence="1">
    <location>
        <position position="93"/>
    </location>
    <ligand>
        <name>L-aspartate</name>
        <dbReference type="ChEBI" id="CHEBI:29991"/>
    </ligand>
</feature>
<feature type="binding site" evidence="1">
    <location>
        <position position="115"/>
    </location>
    <ligand>
        <name>carbamoyl phosphate</name>
        <dbReference type="ChEBI" id="CHEBI:58228"/>
    </ligand>
</feature>
<feature type="binding site" evidence="1">
    <location>
        <position position="145"/>
    </location>
    <ligand>
        <name>carbamoyl phosphate</name>
        <dbReference type="ChEBI" id="CHEBI:58228"/>
    </ligand>
</feature>
<feature type="binding site" evidence="1">
    <location>
        <position position="148"/>
    </location>
    <ligand>
        <name>carbamoyl phosphate</name>
        <dbReference type="ChEBI" id="CHEBI:58228"/>
    </ligand>
</feature>
<feature type="binding site" evidence="1">
    <location>
        <position position="179"/>
    </location>
    <ligand>
        <name>L-aspartate</name>
        <dbReference type="ChEBI" id="CHEBI:29991"/>
    </ligand>
</feature>
<feature type="binding site" evidence="1">
    <location>
        <position position="234"/>
    </location>
    <ligand>
        <name>L-aspartate</name>
        <dbReference type="ChEBI" id="CHEBI:29991"/>
    </ligand>
</feature>
<feature type="binding site" evidence="1">
    <location>
        <position position="275"/>
    </location>
    <ligand>
        <name>carbamoyl phosphate</name>
        <dbReference type="ChEBI" id="CHEBI:58228"/>
    </ligand>
</feature>
<feature type="binding site" evidence="1">
    <location>
        <position position="276"/>
    </location>
    <ligand>
        <name>carbamoyl phosphate</name>
        <dbReference type="ChEBI" id="CHEBI:58228"/>
    </ligand>
</feature>
<comment type="function">
    <text evidence="1">Catalyzes the condensation of carbamoyl phosphate and aspartate to form carbamoyl aspartate and inorganic phosphate, the committed step in the de novo pyrimidine nucleotide biosynthesis pathway.</text>
</comment>
<comment type="catalytic activity">
    <reaction evidence="1">
        <text>carbamoyl phosphate + L-aspartate = N-carbamoyl-L-aspartate + phosphate + H(+)</text>
        <dbReference type="Rhea" id="RHEA:20013"/>
        <dbReference type="ChEBI" id="CHEBI:15378"/>
        <dbReference type="ChEBI" id="CHEBI:29991"/>
        <dbReference type="ChEBI" id="CHEBI:32814"/>
        <dbReference type="ChEBI" id="CHEBI:43474"/>
        <dbReference type="ChEBI" id="CHEBI:58228"/>
        <dbReference type="EC" id="2.1.3.2"/>
    </reaction>
</comment>
<comment type="pathway">
    <text evidence="1">Pyrimidine metabolism; UMP biosynthesis via de novo pathway; (S)-dihydroorotate from bicarbonate: step 2/3.</text>
</comment>
<comment type="subunit">
    <text evidence="1">Heterododecamer (2C3:3R2) of six catalytic PyrB chains organized as two trimers (C3), and six regulatory PyrI chains organized as three dimers (R2).</text>
</comment>
<comment type="similarity">
    <text evidence="1">Belongs to the aspartate/ornithine carbamoyltransferase superfamily. ATCase family.</text>
</comment>
<organism>
    <name type="scientific">Xanthomonas campestris pv. campestris (strain B100)</name>
    <dbReference type="NCBI Taxonomy" id="509169"/>
    <lineage>
        <taxon>Bacteria</taxon>
        <taxon>Pseudomonadati</taxon>
        <taxon>Pseudomonadota</taxon>
        <taxon>Gammaproteobacteria</taxon>
        <taxon>Lysobacterales</taxon>
        <taxon>Lysobacteraceae</taxon>
        <taxon>Xanthomonas</taxon>
    </lineage>
</organism>
<protein>
    <recommendedName>
        <fullName evidence="1">Aspartate carbamoyltransferase catalytic subunit</fullName>
        <ecNumber evidence="1">2.1.3.2</ecNumber>
    </recommendedName>
    <alternativeName>
        <fullName evidence="1">Aspartate transcarbamylase</fullName>
        <shortName evidence="1">ATCase</shortName>
    </alternativeName>
</protein>
<name>PYRB_XANCB</name>
<reference key="1">
    <citation type="journal article" date="2008" name="J. Biotechnol.">
        <title>The genome of Xanthomonas campestris pv. campestris B100 and its use for the reconstruction of metabolic pathways involved in xanthan biosynthesis.</title>
        <authorList>
            <person name="Vorhoelter F.-J."/>
            <person name="Schneiker S."/>
            <person name="Goesmann A."/>
            <person name="Krause L."/>
            <person name="Bekel T."/>
            <person name="Kaiser O."/>
            <person name="Linke B."/>
            <person name="Patschkowski T."/>
            <person name="Rueckert C."/>
            <person name="Schmid J."/>
            <person name="Sidhu V.K."/>
            <person name="Sieber V."/>
            <person name="Tauch A."/>
            <person name="Watt S.A."/>
            <person name="Weisshaar B."/>
            <person name="Becker A."/>
            <person name="Niehaus K."/>
            <person name="Puehler A."/>
        </authorList>
    </citation>
    <scope>NUCLEOTIDE SEQUENCE [LARGE SCALE GENOMIC DNA]</scope>
    <source>
        <strain>B100</strain>
    </source>
</reference>
<proteinExistence type="inferred from homology"/>